<name>AROK_BORPA</name>
<protein>
    <recommendedName>
        <fullName evidence="1">Shikimate kinase</fullName>
        <shortName evidence="1">SK</shortName>
        <ecNumber evidence="1">2.7.1.71</ecNumber>
    </recommendedName>
</protein>
<accession>Q7W2B7</accession>
<organism>
    <name type="scientific">Bordetella parapertussis (strain 12822 / ATCC BAA-587 / NCTC 13253)</name>
    <dbReference type="NCBI Taxonomy" id="257311"/>
    <lineage>
        <taxon>Bacteria</taxon>
        <taxon>Pseudomonadati</taxon>
        <taxon>Pseudomonadota</taxon>
        <taxon>Betaproteobacteria</taxon>
        <taxon>Burkholderiales</taxon>
        <taxon>Alcaligenaceae</taxon>
        <taxon>Bordetella</taxon>
    </lineage>
</organism>
<keyword id="KW-0028">Amino-acid biosynthesis</keyword>
<keyword id="KW-0057">Aromatic amino acid biosynthesis</keyword>
<keyword id="KW-0067">ATP-binding</keyword>
<keyword id="KW-0963">Cytoplasm</keyword>
<keyword id="KW-0418">Kinase</keyword>
<keyword id="KW-0460">Magnesium</keyword>
<keyword id="KW-0479">Metal-binding</keyword>
<keyword id="KW-0547">Nucleotide-binding</keyword>
<keyword id="KW-0808">Transferase</keyword>
<sequence length="211" mass="23039">MNASANLCAASANDPQPGDQEAAHPVACAGDEPAAFLPHDLPIFLVGMMGAGKTTIGRGLARALRREFIDLDHELEARCGVRVPVIFEIEGEAGFRRREAAALQECTQRRQIILATGGGAVLAAENRQALRERGIVIYLRASVEELFRRTSRDRNRPLLATADPRATLRELMVAREPLYNEVADLVIDTGSMPIATLVKSLLPKLQAYEKK</sequence>
<gene>
    <name evidence="1" type="primary">aroK</name>
    <name type="ordered locus">BPP0071</name>
</gene>
<feature type="chain" id="PRO_0000237851" description="Shikimate kinase">
    <location>
        <begin position="1"/>
        <end position="211"/>
    </location>
</feature>
<feature type="region of interest" description="Disordered" evidence="2">
    <location>
        <begin position="1"/>
        <end position="24"/>
    </location>
</feature>
<feature type="compositionally biased region" description="Low complexity" evidence="2">
    <location>
        <begin position="1"/>
        <end position="13"/>
    </location>
</feature>
<feature type="binding site" evidence="1">
    <location>
        <begin position="50"/>
        <end position="55"/>
    </location>
    <ligand>
        <name>ATP</name>
        <dbReference type="ChEBI" id="CHEBI:30616"/>
    </ligand>
</feature>
<feature type="binding site" evidence="1">
    <location>
        <position position="54"/>
    </location>
    <ligand>
        <name>Mg(2+)</name>
        <dbReference type="ChEBI" id="CHEBI:18420"/>
    </ligand>
</feature>
<feature type="binding site" evidence="1">
    <location>
        <position position="72"/>
    </location>
    <ligand>
        <name>substrate</name>
    </ligand>
</feature>
<feature type="binding site" evidence="1">
    <location>
        <position position="96"/>
    </location>
    <ligand>
        <name>substrate</name>
    </ligand>
</feature>
<feature type="binding site" evidence="1">
    <location>
        <position position="118"/>
    </location>
    <ligand>
        <name>substrate</name>
    </ligand>
</feature>
<feature type="binding site" evidence="1">
    <location>
        <position position="156"/>
    </location>
    <ligand>
        <name>ATP</name>
        <dbReference type="ChEBI" id="CHEBI:30616"/>
    </ligand>
</feature>
<feature type="binding site" evidence="1">
    <location>
        <position position="175"/>
    </location>
    <ligand>
        <name>substrate</name>
    </ligand>
</feature>
<comment type="function">
    <text evidence="1">Catalyzes the specific phosphorylation of the 3-hydroxyl group of shikimic acid using ATP as a cosubstrate.</text>
</comment>
<comment type="catalytic activity">
    <reaction evidence="1">
        <text>shikimate + ATP = 3-phosphoshikimate + ADP + H(+)</text>
        <dbReference type="Rhea" id="RHEA:13121"/>
        <dbReference type="ChEBI" id="CHEBI:15378"/>
        <dbReference type="ChEBI" id="CHEBI:30616"/>
        <dbReference type="ChEBI" id="CHEBI:36208"/>
        <dbReference type="ChEBI" id="CHEBI:145989"/>
        <dbReference type="ChEBI" id="CHEBI:456216"/>
        <dbReference type="EC" id="2.7.1.71"/>
    </reaction>
</comment>
<comment type="cofactor">
    <cofactor evidence="1">
        <name>Mg(2+)</name>
        <dbReference type="ChEBI" id="CHEBI:18420"/>
    </cofactor>
    <text evidence="1">Binds 1 Mg(2+) ion per subunit.</text>
</comment>
<comment type="pathway">
    <text evidence="1">Metabolic intermediate biosynthesis; chorismate biosynthesis; chorismate from D-erythrose 4-phosphate and phosphoenolpyruvate: step 5/7.</text>
</comment>
<comment type="subunit">
    <text evidence="1">Monomer.</text>
</comment>
<comment type="subcellular location">
    <subcellularLocation>
        <location evidence="1">Cytoplasm</location>
    </subcellularLocation>
</comment>
<comment type="similarity">
    <text evidence="1">Belongs to the shikimate kinase family.</text>
</comment>
<dbReference type="EC" id="2.7.1.71" evidence="1"/>
<dbReference type="EMBL" id="BX640423">
    <property type="protein sequence ID" value="CAE39812.1"/>
    <property type="molecule type" value="Genomic_DNA"/>
</dbReference>
<dbReference type="RefSeq" id="WP_003806947.1">
    <property type="nucleotide sequence ID" value="NC_002928.3"/>
</dbReference>
<dbReference type="SMR" id="Q7W2B7"/>
<dbReference type="KEGG" id="bpa:BPP0071"/>
<dbReference type="HOGENOM" id="CLU_057607_2_2_4"/>
<dbReference type="UniPathway" id="UPA00053">
    <property type="reaction ID" value="UER00088"/>
</dbReference>
<dbReference type="Proteomes" id="UP000001421">
    <property type="component" value="Chromosome"/>
</dbReference>
<dbReference type="GO" id="GO:0005829">
    <property type="term" value="C:cytosol"/>
    <property type="evidence" value="ECO:0007669"/>
    <property type="project" value="TreeGrafter"/>
</dbReference>
<dbReference type="GO" id="GO:0005524">
    <property type="term" value="F:ATP binding"/>
    <property type="evidence" value="ECO:0007669"/>
    <property type="project" value="UniProtKB-UniRule"/>
</dbReference>
<dbReference type="GO" id="GO:0000287">
    <property type="term" value="F:magnesium ion binding"/>
    <property type="evidence" value="ECO:0007669"/>
    <property type="project" value="UniProtKB-UniRule"/>
</dbReference>
<dbReference type="GO" id="GO:0004765">
    <property type="term" value="F:shikimate kinase activity"/>
    <property type="evidence" value="ECO:0007669"/>
    <property type="project" value="UniProtKB-UniRule"/>
</dbReference>
<dbReference type="GO" id="GO:0008652">
    <property type="term" value="P:amino acid biosynthetic process"/>
    <property type="evidence" value="ECO:0007669"/>
    <property type="project" value="UniProtKB-KW"/>
</dbReference>
<dbReference type="GO" id="GO:0009073">
    <property type="term" value="P:aromatic amino acid family biosynthetic process"/>
    <property type="evidence" value="ECO:0007669"/>
    <property type="project" value="UniProtKB-KW"/>
</dbReference>
<dbReference type="GO" id="GO:0009423">
    <property type="term" value="P:chorismate biosynthetic process"/>
    <property type="evidence" value="ECO:0007669"/>
    <property type="project" value="UniProtKB-UniRule"/>
</dbReference>
<dbReference type="CDD" id="cd00464">
    <property type="entry name" value="SK"/>
    <property type="match status" value="1"/>
</dbReference>
<dbReference type="Gene3D" id="3.40.50.300">
    <property type="entry name" value="P-loop containing nucleotide triphosphate hydrolases"/>
    <property type="match status" value="1"/>
</dbReference>
<dbReference type="HAMAP" id="MF_00109">
    <property type="entry name" value="Shikimate_kinase"/>
    <property type="match status" value="1"/>
</dbReference>
<dbReference type="InterPro" id="IPR027417">
    <property type="entry name" value="P-loop_NTPase"/>
</dbReference>
<dbReference type="InterPro" id="IPR031322">
    <property type="entry name" value="Shikimate/glucono_kinase"/>
</dbReference>
<dbReference type="InterPro" id="IPR000623">
    <property type="entry name" value="Shikimate_kinase/TSH1"/>
</dbReference>
<dbReference type="InterPro" id="IPR023000">
    <property type="entry name" value="Shikimate_kinase_CS"/>
</dbReference>
<dbReference type="PANTHER" id="PTHR21087">
    <property type="entry name" value="SHIKIMATE KINASE"/>
    <property type="match status" value="1"/>
</dbReference>
<dbReference type="PANTHER" id="PTHR21087:SF16">
    <property type="entry name" value="SHIKIMATE KINASE 1, CHLOROPLASTIC"/>
    <property type="match status" value="1"/>
</dbReference>
<dbReference type="Pfam" id="PF01202">
    <property type="entry name" value="SKI"/>
    <property type="match status" value="1"/>
</dbReference>
<dbReference type="PRINTS" id="PR01100">
    <property type="entry name" value="SHIKIMTKNASE"/>
</dbReference>
<dbReference type="SUPFAM" id="SSF52540">
    <property type="entry name" value="P-loop containing nucleoside triphosphate hydrolases"/>
    <property type="match status" value="1"/>
</dbReference>
<dbReference type="PROSITE" id="PS01128">
    <property type="entry name" value="SHIKIMATE_KINASE"/>
    <property type="match status" value="1"/>
</dbReference>
<reference key="1">
    <citation type="journal article" date="2003" name="Nat. Genet.">
        <title>Comparative analysis of the genome sequences of Bordetella pertussis, Bordetella parapertussis and Bordetella bronchiseptica.</title>
        <authorList>
            <person name="Parkhill J."/>
            <person name="Sebaihia M."/>
            <person name="Preston A."/>
            <person name="Murphy L.D."/>
            <person name="Thomson N.R."/>
            <person name="Harris D.E."/>
            <person name="Holden M.T.G."/>
            <person name="Churcher C.M."/>
            <person name="Bentley S.D."/>
            <person name="Mungall K.L."/>
            <person name="Cerdeno-Tarraga A.-M."/>
            <person name="Temple L."/>
            <person name="James K.D."/>
            <person name="Harris B."/>
            <person name="Quail M.A."/>
            <person name="Achtman M."/>
            <person name="Atkin R."/>
            <person name="Baker S."/>
            <person name="Basham D."/>
            <person name="Bason N."/>
            <person name="Cherevach I."/>
            <person name="Chillingworth T."/>
            <person name="Collins M."/>
            <person name="Cronin A."/>
            <person name="Davis P."/>
            <person name="Doggett J."/>
            <person name="Feltwell T."/>
            <person name="Goble A."/>
            <person name="Hamlin N."/>
            <person name="Hauser H."/>
            <person name="Holroyd S."/>
            <person name="Jagels K."/>
            <person name="Leather S."/>
            <person name="Moule S."/>
            <person name="Norberczak H."/>
            <person name="O'Neil S."/>
            <person name="Ormond D."/>
            <person name="Price C."/>
            <person name="Rabbinowitsch E."/>
            <person name="Rutter S."/>
            <person name="Sanders M."/>
            <person name="Saunders D."/>
            <person name="Seeger K."/>
            <person name="Sharp S."/>
            <person name="Simmonds M."/>
            <person name="Skelton J."/>
            <person name="Squares R."/>
            <person name="Squares S."/>
            <person name="Stevens K."/>
            <person name="Unwin L."/>
            <person name="Whitehead S."/>
            <person name="Barrell B.G."/>
            <person name="Maskell D.J."/>
        </authorList>
    </citation>
    <scope>NUCLEOTIDE SEQUENCE [LARGE SCALE GENOMIC DNA]</scope>
    <source>
        <strain>12822 / ATCC BAA-587 / NCTC 13253</strain>
    </source>
</reference>
<evidence type="ECO:0000255" key="1">
    <source>
        <dbReference type="HAMAP-Rule" id="MF_00109"/>
    </source>
</evidence>
<evidence type="ECO:0000256" key="2">
    <source>
        <dbReference type="SAM" id="MobiDB-lite"/>
    </source>
</evidence>
<proteinExistence type="inferred from homology"/>